<feature type="chain" id="PRO_0000234113" description="Speedy protein A">
    <location>
        <begin position="1"/>
        <end position="310"/>
    </location>
</feature>
<feature type="region of interest" description="Speedy/Ringo box; Required for CDK-binding" evidence="4">
    <location>
        <begin position="67"/>
        <end position="199"/>
    </location>
</feature>
<feature type="region of interest" description="Disordered" evidence="2">
    <location>
        <begin position="241"/>
        <end position="310"/>
    </location>
</feature>
<feature type="modified residue" description="Phosphoserine" evidence="12">
    <location>
        <position position="221"/>
    </location>
</feature>
<feature type="modified residue" description="Phosphothreonine" evidence="12">
    <location>
        <position position="223"/>
    </location>
</feature>
<feature type="splice variant" id="VSP_052029" description="In isoform 1." evidence="6 7">
    <original>VAN</original>
    <variation>GMA</variation>
    <location>
        <begin position="281"/>
        <end position="283"/>
    </location>
</feature>
<feature type="splice variant" id="VSP_052030" description="In isoform 1." evidence="6 7">
    <location>
        <begin position="284"/>
        <end position="310"/>
    </location>
</feature>
<feature type="mutagenesis site" description="Abolishes interaction with CDK2." evidence="4">
    <original>D</original>
    <variation>A</variation>
    <location>
        <position position="89"/>
    </location>
</feature>
<feature type="mutagenesis site" description="Abolishes interaction with CDK2." evidence="4">
    <original>M</original>
    <variation>A</variation>
    <location>
        <position position="102"/>
    </location>
</feature>
<feature type="mutagenesis site" description="Abolishes interaction with CDK2." evidence="4">
    <original>Y</original>
    <variation>A</variation>
    <location>
        <position position="106"/>
    </location>
</feature>
<feature type="mutagenesis site" description="Abolishes interaction with CDK2." evidence="4">
    <original>F</original>
    <variation>A</variation>
    <location>
        <position position="107"/>
    </location>
</feature>
<feature type="mutagenesis site" description="No effect on CDK2-binding." evidence="4">
    <original>EED</original>
    <variation>AAA</variation>
    <location>
        <begin position="133"/>
        <end position="135"/>
    </location>
</feature>
<feature type="sequence conflict" description="In Ref. 1; AAW32476/AAW32477." evidence="8" ref="1">
    <original>D</original>
    <variation>G</variation>
    <location>
        <position position="258"/>
    </location>
</feature>
<protein>
    <recommendedName>
        <fullName>Speedy protein A</fullName>
    </recommendedName>
    <alternativeName>
        <fullName>Protein expressed in male leptotene and zygotene spermatocytes 465</fullName>
        <shortName>MLZ-465</shortName>
    </alternativeName>
    <alternativeName>
        <fullName>Rapid inducer of G2/M progression in oocytes A</fullName>
        <shortName>RINGO A</shortName>
        <shortName>mSpy/Ringo A</shortName>
    </alternativeName>
    <alternativeName>
        <fullName>Speedy-1</fullName>
        <shortName>Spy1</shortName>
    </alternativeName>
</protein>
<dbReference type="EMBL" id="AY820306">
    <property type="protein sequence ID" value="AAW32476.1"/>
    <property type="molecule type" value="mRNA"/>
</dbReference>
<dbReference type="EMBL" id="AY820307">
    <property type="protein sequence ID" value="AAW32477.1"/>
    <property type="molecule type" value="mRNA"/>
</dbReference>
<dbReference type="EMBL" id="AK077138">
    <property type="protein sequence ID" value="BAC36637.1"/>
    <property type="molecule type" value="mRNA"/>
</dbReference>
<dbReference type="EMBL" id="CT010429">
    <property type="status" value="NOT_ANNOTATED_CDS"/>
    <property type="molecule type" value="Genomic_DNA"/>
</dbReference>
<dbReference type="CCDS" id="CCDS50178.1">
    <molecule id="Q5IBH7-2"/>
</dbReference>
<dbReference type="CCDS" id="CCDS50179.1">
    <molecule id="Q5IBH7-1"/>
</dbReference>
<dbReference type="RefSeq" id="NP_001136103.1">
    <molecule id="Q5IBH7-1"/>
    <property type="nucleotide sequence ID" value="NM_001142631.1"/>
</dbReference>
<dbReference type="RefSeq" id="NP_083530.1">
    <molecule id="Q5IBH7-2"/>
    <property type="nucleotide sequence ID" value="NM_029254.1"/>
</dbReference>
<dbReference type="RefSeq" id="XP_006524970.1">
    <molecule id="Q5IBH7-2"/>
    <property type="nucleotide sequence ID" value="XM_006524907.3"/>
</dbReference>
<dbReference type="RefSeq" id="XP_006524971.1">
    <molecule id="Q5IBH7-2"/>
    <property type="nucleotide sequence ID" value="XM_006524908.3"/>
</dbReference>
<dbReference type="RefSeq" id="XP_011244904.1">
    <molecule id="Q5IBH7-2"/>
    <property type="nucleotide sequence ID" value="XM_011246602.3"/>
</dbReference>
<dbReference type="SMR" id="Q5IBH7"/>
<dbReference type="BioGRID" id="214324">
    <property type="interactions" value="1"/>
</dbReference>
<dbReference type="FunCoup" id="Q5IBH7">
    <property type="interactions" value="1062"/>
</dbReference>
<dbReference type="STRING" id="10090.ENSMUSP00000125912"/>
<dbReference type="GlyGen" id="Q5IBH7">
    <property type="glycosylation" value="1 site"/>
</dbReference>
<dbReference type="iPTMnet" id="Q5IBH7"/>
<dbReference type="PhosphoSitePlus" id="Q5IBH7"/>
<dbReference type="SwissPalm" id="Q5IBH7"/>
<dbReference type="PaxDb" id="10090-ENSMUSP00000118426"/>
<dbReference type="ProteomicsDB" id="257556">
    <molecule id="Q5IBH7-2"/>
</dbReference>
<dbReference type="ProteomicsDB" id="257557">
    <molecule id="Q5IBH7-1"/>
</dbReference>
<dbReference type="Antibodypedia" id="28865">
    <property type="antibodies" value="220 antibodies from 27 providers"/>
</dbReference>
<dbReference type="Ensembl" id="ENSMUST00000124001.8">
    <molecule id="Q5IBH7-1"/>
    <property type="protein sequence ID" value="ENSMUSP00000118426.2"/>
    <property type="gene ID" value="ENSMUSG00000052525.15"/>
</dbReference>
<dbReference type="Ensembl" id="ENSMUST00000144142.2">
    <molecule id="Q5IBH7-2"/>
    <property type="protein sequence ID" value="ENSMUSP00000118994.2"/>
    <property type="gene ID" value="ENSMUSG00000052525.15"/>
</dbReference>
<dbReference type="Ensembl" id="ENSMUST00000167641.8">
    <molecule id="Q5IBH7-2"/>
    <property type="protein sequence ID" value="ENSMUSP00000125912.2"/>
    <property type="gene ID" value="ENSMUSG00000052525.15"/>
</dbReference>
<dbReference type="GeneID" id="70891"/>
<dbReference type="KEGG" id="mmu:70891"/>
<dbReference type="UCSC" id="uc008dmo.2">
    <molecule id="Q5IBH7-2"/>
    <property type="organism name" value="mouse"/>
</dbReference>
<dbReference type="AGR" id="MGI:1918141"/>
<dbReference type="CTD" id="245711"/>
<dbReference type="MGI" id="MGI:1918141">
    <property type="gene designation" value="Spdya"/>
</dbReference>
<dbReference type="VEuPathDB" id="HostDB:ENSMUSG00000052525"/>
<dbReference type="eggNOG" id="KOG3938">
    <property type="taxonomic scope" value="Eukaryota"/>
</dbReference>
<dbReference type="GeneTree" id="ENSGT00940000154524"/>
<dbReference type="HOGENOM" id="CLU_070353_1_2_1"/>
<dbReference type="InParanoid" id="Q5IBH7"/>
<dbReference type="OMA" id="VCQTPPT"/>
<dbReference type="OrthoDB" id="9442170at2759"/>
<dbReference type="PhylomeDB" id="Q5IBH7"/>
<dbReference type="TreeFam" id="TF329827"/>
<dbReference type="BioGRID-ORCS" id="70891">
    <property type="hits" value="3 hits in 78 CRISPR screens"/>
</dbReference>
<dbReference type="ChiTaRS" id="Spdya">
    <property type="organism name" value="mouse"/>
</dbReference>
<dbReference type="PRO" id="PR:Q5IBH7"/>
<dbReference type="Proteomes" id="UP000000589">
    <property type="component" value="Chromosome 17"/>
</dbReference>
<dbReference type="RNAct" id="Q5IBH7">
    <property type="molecule type" value="protein"/>
</dbReference>
<dbReference type="Bgee" id="ENSMUSG00000052525">
    <property type="expression patterns" value="Expressed in spermatocyte and 83 other cell types or tissues"/>
</dbReference>
<dbReference type="ExpressionAtlas" id="Q5IBH7">
    <property type="expression patterns" value="baseline and differential"/>
</dbReference>
<dbReference type="GO" id="GO:0000781">
    <property type="term" value="C:chromosome, telomeric region"/>
    <property type="evidence" value="ECO:0000314"/>
    <property type="project" value="MGI"/>
</dbReference>
<dbReference type="GO" id="GO:0005635">
    <property type="term" value="C:nuclear envelope"/>
    <property type="evidence" value="ECO:0000314"/>
    <property type="project" value="MGI"/>
</dbReference>
<dbReference type="GO" id="GO:0005654">
    <property type="term" value="C:nucleoplasm"/>
    <property type="evidence" value="ECO:0007669"/>
    <property type="project" value="Ensembl"/>
</dbReference>
<dbReference type="GO" id="GO:0005634">
    <property type="term" value="C:nucleus"/>
    <property type="evidence" value="ECO:0000314"/>
    <property type="project" value="UniProtKB"/>
</dbReference>
<dbReference type="GO" id="GO:0001741">
    <property type="term" value="C:XY body"/>
    <property type="evidence" value="ECO:0000314"/>
    <property type="project" value="MGI"/>
</dbReference>
<dbReference type="GO" id="GO:0030295">
    <property type="term" value="F:protein kinase activator activity"/>
    <property type="evidence" value="ECO:0000314"/>
    <property type="project" value="MGI"/>
</dbReference>
<dbReference type="GO" id="GO:0019901">
    <property type="term" value="F:protein kinase binding"/>
    <property type="evidence" value="ECO:0000353"/>
    <property type="project" value="UniProtKB"/>
</dbReference>
<dbReference type="GO" id="GO:0006974">
    <property type="term" value="P:DNA damage response"/>
    <property type="evidence" value="ECO:0007669"/>
    <property type="project" value="UniProtKB-KW"/>
</dbReference>
<dbReference type="GO" id="GO:0070200">
    <property type="term" value="P:establishment of protein localization to telomere"/>
    <property type="evidence" value="ECO:0000315"/>
    <property type="project" value="MGI"/>
</dbReference>
<dbReference type="GO" id="GO:0000082">
    <property type="term" value="P:G1/S transition of mitotic cell cycle"/>
    <property type="evidence" value="ECO:0000250"/>
    <property type="project" value="UniProtKB"/>
</dbReference>
<dbReference type="GO" id="GO:0007140">
    <property type="term" value="P:male meiotic nuclear division"/>
    <property type="evidence" value="ECO:0000270"/>
    <property type="project" value="UniProtKB"/>
</dbReference>
<dbReference type="GO" id="GO:0070197">
    <property type="term" value="P:meiotic attachment of telomere to nuclear envelope"/>
    <property type="evidence" value="ECO:0000314"/>
    <property type="project" value="MGI"/>
</dbReference>
<dbReference type="GO" id="GO:0048477">
    <property type="term" value="P:oogenesis"/>
    <property type="evidence" value="ECO:0000315"/>
    <property type="project" value="MGI"/>
</dbReference>
<dbReference type="GO" id="GO:0008284">
    <property type="term" value="P:positive regulation of cell population proliferation"/>
    <property type="evidence" value="ECO:0007669"/>
    <property type="project" value="Ensembl"/>
</dbReference>
<dbReference type="GO" id="GO:0045737">
    <property type="term" value="P:positive regulation of cyclin-dependent protein serine/threonine kinase activity"/>
    <property type="evidence" value="ECO:0000314"/>
    <property type="project" value="UniProtKB"/>
</dbReference>
<dbReference type="GO" id="GO:0007283">
    <property type="term" value="P:spermatogenesis"/>
    <property type="evidence" value="ECO:0000315"/>
    <property type="project" value="MGI"/>
</dbReference>
<dbReference type="GO" id="GO:0016233">
    <property type="term" value="P:telomere capping"/>
    <property type="evidence" value="ECO:0000315"/>
    <property type="project" value="MGI"/>
</dbReference>
<dbReference type="InterPro" id="IPR020984">
    <property type="entry name" value="Speedy"/>
</dbReference>
<dbReference type="InterPro" id="IPR052316">
    <property type="entry name" value="Speedy-Ringo_regulator"/>
</dbReference>
<dbReference type="PANTHER" id="PTHR31545">
    <property type="entry name" value="SEEDY PROTEIN A/C FAMILY MEMBER"/>
    <property type="match status" value="1"/>
</dbReference>
<dbReference type="PANTHER" id="PTHR31545:SF4">
    <property type="entry name" value="SPEEDY PROTEIN A"/>
    <property type="match status" value="1"/>
</dbReference>
<dbReference type="Pfam" id="PF11357">
    <property type="entry name" value="Spy1"/>
    <property type="match status" value="1"/>
</dbReference>
<name>SPDYA_MOUSE</name>
<keyword id="KW-0025">Alternative splicing</keyword>
<keyword id="KW-0131">Cell cycle</keyword>
<keyword id="KW-0217">Developmental protein</keyword>
<keyword id="KW-0227">DNA damage</keyword>
<keyword id="KW-0539">Nucleus</keyword>
<keyword id="KW-0597">Phosphoprotein</keyword>
<keyword id="KW-1185">Reference proteome</keyword>
<accession>Q5IBH7</accession>
<accession>B8JJC0</accession>
<accession>Q5IBH8</accession>
<accession>Q8C5T5</accession>
<sequence>MRHNQMYCETPPTVTIHVKSGSNRSHQTRKPISLKRPILKDSWEASENNAQNNKSKRPRGPCLIIQRQEMTAFFKLFDDDLIQDFLWMDCCCKIADKYLLAMTFVYFKRAKFTINEHTRINFFIALYLANTVEEDEEEAKYEIFPWALGKNWRKLFPNFLKLRDQLWDRIDYRAIVSRRCCEEVMAIAPTHYIWQRERSVHHSGAVRNYNRDEVHLPRGPSATPVDCSLCGKKGRYVRLGLSSSSSSSSDTGELMEKDSQELHSAFSVDTAGDPPHTYSQVANDHQSNKENETNFVKKNKSVEWFAESEE</sequence>
<proteinExistence type="evidence at protein level"/>
<comment type="function">
    <text evidence="1 4">Regulates the G1/S phase transition of the cell cycle by binding and activating CDK1 and CDK2 (PubMed:15611625). Contributes to CDK2 activation without promoting CDK2 phosphorylation, by inducing a conformation change of the CDK2 T-loop that obstructs the substrate-binding cleft prior to kinase activation. Interferes with CDKN1B-mediated inhibition of CDK2. Mediates cell survival during the DNA damage process through activation of CDK2 (By similarity).</text>
</comment>
<comment type="subunit">
    <text evidence="1 4">Interacts with CDK1, CDK2 and CDKN1B/KIP1 (PubMed:15611625). Identified in a complex with CDK2 and CDKN1B/KIP1, where it interacts primarily with CDK2 (By similarity).</text>
</comment>
<comment type="subcellular location">
    <subcellularLocation>
        <location evidence="5">Nucleus</location>
    </subcellularLocation>
</comment>
<comment type="alternative products">
    <event type="alternative splicing"/>
    <isoform>
        <id>Q5IBH7-2</id>
        <name evidence="4">2</name>
        <name evidence="4">A2</name>
        <sequence type="displayed"/>
    </isoform>
    <isoform>
        <id>Q5IBH7-1</id>
        <name evidence="4">1</name>
        <name evidence="4">A1</name>
        <sequence type="described" ref="VSP_052029 VSP_052030"/>
    </isoform>
</comment>
<comment type="tissue specificity">
    <text evidence="3 4 5">Expressed at a high level in testis. Also expressed in the adult ovary and in immature oocytes.</text>
</comment>
<comment type="domain">
    <text evidence="4">The C-terminus is required for CDK2-activation, but not CDK2-binding.</text>
</comment>
<comment type="similarity">
    <text evidence="8">Belongs to the Speedy/Ringo family.</text>
</comment>
<organism>
    <name type="scientific">Mus musculus</name>
    <name type="common">Mouse</name>
    <dbReference type="NCBI Taxonomy" id="10090"/>
    <lineage>
        <taxon>Eukaryota</taxon>
        <taxon>Metazoa</taxon>
        <taxon>Chordata</taxon>
        <taxon>Craniata</taxon>
        <taxon>Vertebrata</taxon>
        <taxon>Euteleostomi</taxon>
        <taxon>Mammalia</taxon>
        <taxon>Eutheria</taxon>
        <taxon>Euarchontoglires</taxon>
        <taxon>Glires</taxon>
        <taxon>Rodentia</taxon>
        <taxon>Myomorpha</taxon>
        <taxon>Muroidea</taxon>
        <taxon>Muridae</taxon>
        <taxon>Murinae</taxon>
        <taxon>Mus</taxon>
        <taxon>Mus</taxon>
    </lineage>
</organism>
<gene>
    <name evidence="11" type="primary">Spdya</name>
    <name evidence="11" type="synonym">Spdy1</name>
</gene>
<evidence type="ECO:0000250" key="1">
    <source>
        <dbReference type="UniProtKB" id="Q5MJ70"/>
    </source>
</evidence>
<evidence type="ECO:0000256" key="2">
    <source>
        <dbReference type="SAM" id="MobiDB-lite"/>
    </source>
</evidence>
<evidence type="ECO:0000269" key="3">
    <source>
    </source>
</evidence>
<evidence type="ECO:0000269" key="4">
    <source>
    </source>
</evidence>
<evidence type="ECO:0000269" key="5">
    <source>
    </source>
</evidence>
<evidence type="ECO:0000303" key="6">
    <source>
    </source>
</evidence>
<evidence type="ECO:0000303" key="7">
    <source>
    </source>
</evidence>
<evidence type="ECO:0000305" key="8"/>
<evidence type="ECO:0000312" key="9">
    <source>
        <dbReference type="EMBL" id="AAW32477.1"/>
    </source>
</evidence>
<evidence type="ECO:0000312" key="10">
    <source>
        <dbReference type="EMBL" id="BAC36637.1"/>
    </source>
</evidence>
<evidence type="ECO:0000312" key="11">
    <source>
        <dbReference type="MGI" id="MGI:1918141"/>
    </source>
</evidence>
<evidence type="ECO:0007744" key="12">
    <source>
    </source>
</evidence>
<reference evidence="8 9" key="1">
    <citation type="journal article" date="2005" name="Cell Cycle">
        <title>Identification and comparative analysis of multiple mammalian Speedy/Ringo proteins.</title>
        <authorList>
            <person name="Cheng A."/>
            <person name="Xiong W."/>
            <person name="Ferrell J.E. Jr."/>
            <person name="Solomon M.J."/>
        </authorList>
    </citation>
    <scope>NUCLEOTIDE SEQUENCE [MRNA] (ISOFORMS 1 AND 2)</scope>
    <scope>FUNCTION</scope>
    <scope>INTERACTION WITH CDK1 AND CDK2</scope>
    <scope>TISSUE SPECIFICITY</scope>
    <scope>DOMAIN</scope>
    <scope>MUTAGENESIS OF ASP-89; MET-102; TYR-106; PHE-107 AND 133-GLU--ASP-135</scope>
    <source>
        <strain evidence="9">BALB/cJ</strain>
        <tissue evidence="9">Testis</tissue>
    </source>
</reference>
<reference evidence="8 10" key="2">
    <citation type="journal article" date="2005" name="Science">
        <title>The transcriptional landscape of the mammalian genome.</title>
        <authorList>
            <person name="Carninci P."/>
            <person name="Kasukawa T."/>
            <person name="Katayama S."/>
            <person name="Gough J."/>
            <person name="Frith M.C."/>
            <person name="Maeda N."/>
            <person name="Oyama R."/>
            <person name="Ravasi T."/>
            <person name="Lenhard B."/>
            <person name="Wells C."/>
            <person name="Kodzius R."/>
            <person name="Shimokawa K."/>
            <person name="Bajic V.B."/>
            <person name="Brenner S.E."/>
            <person name="Batalov S."/>
            <person name="Forrest A.R."/>
            <person name="Zavolan M."/>
            <person name="Davis M.J."/>
            <person name="Wilming L.G."/>
            <person name="Aidinis V."/>
            <person name="Allen J.E."/>
            <person name="Ambesi-Impiombato A."/>
            <person name="Apweiler R."/>
            <person name="Aturaliya R.N."/>
            <person name="Bailey T.L."/>
            <person name="Bansal M."/>
            <person name="Baxter L."/>
            <person name="Beisel K.W."/>
            <person name="Bersano T."/>
            <person name="Bono H."/>
            <person name="Chalk A.M."/>
            <person name="Chiu K.P."/>
            <person name="Choudhary V."/>
            <person name="Christoffels A."/>
            <person name="Clutterbuck D.R."/>
            <person name="Crowe M.L."/>
            <person name="Dalla E."/>
            <person name="Dalrymple B.P."/>
            <person name="de Bono B."/>
            <person name="Della Gatta G."/>
            <person name="di Bernardo D."/>
            <person name="Down T."/>
            <person name="Engstrom P."/>
            <person name="Fagiolini M."/>
            <person name="Faulkner G."/>
            <person name="Fletcher C.F."/>
            <person name="Fukushima T."/>
            <person name="Furuno M."/>
            <person name="Futaki S."/>
            <person name="Gariboldi M."/>
            <person name="Georgii-Hemming P."/>
            <person name="Gingeras T.R."/>
            <person name="Gojobori T."/>
            <person name="Green R.E."/>
            <person name="Gustincich S."/>
            <person name="Harbers M."/>
            <person name="Hayashi Y."/>
            <person name="Hensch T.K."/>
            <person name="Hirokawa N."/>
            <person name="Hill D."/>
            <person name="Huminiecki L."/>
            <person name="Iacono M."/>
            <person name="Ikeo K."/>
            <person name="Iwama A."/>
            <person name="Ishikawa T."/>
            <person name="Jakt M."/>
            <person name="Kanapin A."/>
            <person name="Katoh M."/>
            <person name="Kawasawa Y."/>
            <person name="Kelso J."/>
            <person name="Kitamura H."/>
            <person name="Kitano H."/>
            <person name="Kollias G."/>
            <person name="Krishnan S.P."/>
            <person name="Kruger A."/>
            <person name="Kummerfeld S.K."/>
            <person name="Kurochkin I.V."/>
            <person name="Lareau L.F."/>
            <person name="Lazarevic D."/>
            <person name="Lipovich L."/>
            <person name="Liu J."/>
            <person name="Liuni S."/>
            <person name="McWilliam S."/>
            <person name="Madan Babu M."/>
            <person name="Madera M."/>
            <person name="Marchionni L."/>
            <person name="Matsuda H."/>
            <person name="Matsuzawa S."/>
            <person name="Miki H."/>
            <person name="Mignone F."/>
            <person name="Miyake S."/>
            <person name="Morris K."/>
            <person name="Mottagui-Tabar S."/>
            <person name="Mulder N."/>
            <person name="Nakano N."/>
            <person name="Nakauchi H."/>
            <person name="Ng P."/>
            <person name="Nilsson R."/>
            <person name="Nishiguchi S."/>
            <person name="Nishikawa S."/>
            <person name="Nori F."/>
            <person name="Ohara O."/>
            <person name="Okazaki Y."/>
            <person name="Orlando V."/>
            <person name="Pang K.C."/>
            <person name="Pavan W.J."/>
            <person name="Pavesi G."/>
            <person name="Pesole G."/>
            <person name="Petrovsky N."/>
            <person name="Piazza S."/>
            <person name="Reed J."/>
            <person name="Reid J.F."/>
            <person name="Ring B.Z."/>
            <person name="Ringwald M."/>
            <person name="Rost B."/>
            <person name="Ruan Y."/>
            <person name="Salzberg S.L."/>
            <person name="Sandelin A."/>
            <person name="Schneider C."/>
            <person name="Schoenbach C."/>
            <person name="Sekiguchi K."/>
            <person name="Semple C.A."/>
            <person name="Seno S."/>
            <person name="Sessa L."/>
            <person name="Sheng Y."/>
            <person name="Shibata Y."/>
            <person name="Shimada H."/>
            <person name="Shimada K."/>
            <person name="Silva D."/>
            <person name="Sinclair B."/>
            <person name="Sperling S."/>
            <person name="Stupka E."/>
            <person name="Sugiura K."/>
            <person name="Sultana R."/>
            <person name="Takenaka Y."/>
            <person name="Taki K."/>
            <person name="Tammoja K."/>
            <person name="Tan S.L."/>
            <person name="Tang S."/>
            <person name="Taylor M.S."/>
            <person name="Tegner J."/>
            <person name="Teichmann S.A."/>
            <person name="Ueda H.R."/>
            <person name="van Nimwegen E."/>
            <person name="Verardo R."/>
            <person name="Wei C.L."/>
            <person name="Yagi K."/>
            <person name="Yamanishi H."/>
            <person name="Zabarovsky E."/>
            <person name="Zhu S."/>
            <person name="Zimmer A."/>
            <person name="Hide W."/>
            <person name="Bult C."/>
            <person name="Grimmond S.M."/>
            <person name="Teasdale R.D."/>
            <person name="Liu E.T."/>
            <person name="Brusic V."/>
            <person name="Quackenbush J."/>
            <person name="Wahlestedt C."/>
            <person name="Mattick J.S."/>
            <person name="Hume D.A."/>
            <person name="Kai C."/>
            <person name="Sasaki D."/>
            <person name="Tomaru Y."/>
            <person name="Fukuda S."/>
            <person name="Kanamori-Katayama M."/>
            <person name="Suzuki M."/>
            <person name="Aoki J."/>
            <person name="Arakawa T."/>
            <person name="Iida J."/>
            <person name="Imamura K."/>
            <person name="Itoh M."/>
            <person name="Kato T."/>
            <person name="Kawaji H."/>
            <person name="Kawagashira N."/>
            <person name="Kawashima T."/>
            <person name="Kojima M."/>
            <person name="Kondo S."/>
            <person name="Konno H."/>
            <person name="Nakano K."/>
            <person name="Ninomiya N."/>
            <person name="Nishio T."/>
            <person name="Okada M."/>
            <person name="Plessy C."/>
            <person name="Shibata K."/>
            <person name="Shiraki T."/>
            <person name="Suzuki S."/>
            <person name="Tagami M."/>
            <person name="Waki K."/>
            <person name="Watahiki A."/>
            <person name="Okamura-Oho Y."/>
            <person name="Suzuki H."/>
            <person name="Kawai J."/>
            <person name="Hayashizaki Y."/>
        </authorList>
    </citation>
    <scope>NUCLEOTIDE SEQUENCE [LARGE SCALE MRNA] (ISOFORM 1)</scope>
    <source>
        <strain evidence="10">C57BL/6J</strain>
        <tissue evidence="10">Testis</tissue>
    </source>
</reference>
<reference key="3">
    <citation type="journal article" date="2009" name="PLoS Biol.">
        <title>Lineage-specific biology revealed by a finished genome assembly of the mouse.</title>
        <authorList>
            <person name="Church D.M."/>
            <person name="Goodstadt L."/>
            <person name="Hillier L.W."/>
            <person name="Zody M.C."/>
            <person name="Goldstein S."/>
            <person name="She X."/>
            <person name="Bult C.J."/>
            <person name="Agarwala R."/>
            <person name="Cherry J.L."/>
            <person name="DiCuccio M."/>
            <person name="Hlavina W."/>
            <person name="Kapustin Y."/>
            <person name="Meric P."/>
            <person name="Maglott D."/>
            <person name="Birtle Z."/>
            <person name="Marques A.C."/>
            <person name="Graves T."/>
            <person name="Zhou S."/>
            <person name="Teague B."/>
            <person name="Potamousis K."/>
            <person name="Churas C."/>
            <person name="Place M."/>
            <person name="Herschleb J."/>
            <person name="Runnheim R."/>
            <person name="Forrest D."/>
            <person name="Amos-Landgraf J."/>
            <person name="Schwartz D.C."/>
            <person name="Cheng Z."/>
            <person name="Lindblad-Toh K."/>
            <person name="Eichler E.E."/>
            <person name="Ponting C.P."/>
        </authorList>
    </citation>
    <scope>NUCLEOTIDE SEQUENCE [LARGE SCALE GENOMIC DNA]</scope>
    <source>
        <strain>C57BL/6J</strain>
    </source>
</reference>
<reference evidence="8" key="4">
    <citation type="journal article" date="2001" name="Biol. Cell">
        <title>RINGO efficiently triggers meiosis resumption in mouse oocytes and induces cell cycle arrest in embryos.</title>
        <authorList>
            <person name="Terret M.E."/>
            <person name="Ferby I."/>
            <person name="Nebreda A.R."/>
            <person name="Verlhac M.H."/>
        </authorList>
    </citation>
    <scope>TISSUE SPECIFICITY</scope>
</reference>
<reference key="5">
    <citation type="journal article" date="2010" name="Cell">
        <title>A tissue-specific atlas of mouse protein phosphorylation and expression.</title>
        <authorList>
            <person name="Huttlin E.L."/>
            <person name="Jedrychowski M.P."/>
            <person name="Elias J.E."/>
            <person name="Goswami T."/>
            <person name="Rad R."/>
            <person name="Beausoleil S.A."/>
            <person name="Villen J."/>
            <person name="Haas W."/>
            <person name="Sowa M.E."/>
            <person name="Gygi S.P."/>
        </authorList>
    </citation>
    <scope>PHOSPHORYLATION [LARGE SCALE ANALYSIS] AT SER-221 AND THR-223</scope>
    <scope>IDENTIFICATION BY MASS SPECTROMETRY [LARGE SCALE ANALYSIS]</scope>
    <source>
        <tissue>Testis</tissue>
    </source>
</reference>
<reference key="6">
    <citation type="journal article" date="2010" name="J. Hum. Genet.">
        <title>Screening of genes involved in chromosome segregation during meiosis I: toward the identification of genes responsible for infertility in humans.</title>
        <authorList>
            <person name="Kogo H."/>
            <person name="Kowa-Sugiyama H."/>
            <person name="Yamada K."/>
            <person name="Bolor H."/>
            <person name="Tsutsumi M."/>
            <person name="Ohye T."/>
            <person name="Inagaki H."/>
            <person name="Taniguchi M."/>
            <person name="Toda T."/>
            <person name="Kurahashi H."/>
        </authorList>
    </citation>
    <scope>TISSUE SPECIFICITY</scope>
    <scope>SUBCELLULAR LOCATION</scope>
</reference>